<proteinExistence type="evidence at protein level"/>
<accession>Q86RB2</accession>
<evidence type="ECO:0000250" key="1"/>
<evidence type="ECO:0000250" key="2">
    <source>
        <dbReference type="UniProtKB" id="P56636"/>
    </source>
</evidence>
<evidence type="ECO:0000269" key="3">
    <source>
    </source>
</evidence>
<evidence type="ECO:0000303" key="4">
    <source>
    </source>
</evidence>
<evidence type="ECO:0000303" key="5">
    <source>
    </source>
</evidence>
<evidence type="ECO:0000305" key="6"/>
<evidence type="ECO:0000305" key="7">
    <source>
    </source>
</evidence>
<evidence type="ECO:0000305" key="8">
    <source>
    </source>
</evidence>
<evidence type="ECO:0007829" key="9">
    <source>
        <dbReference type="PDB" id="5CO5"/>
    </source>
</evidence>
<organism>
    <name type="scientific">Conus geographus</name>
    <name type="common">Geography cone</name>
    <name type="synonym">Nubecula geographus</name>
    <dbReference type="NCBI Taxonomy" id="6491"/>
    <lineage>
        <taxon>Eukaryota</taxon>
        <taxon>Metazoa</taxon>
        <taxon>Spiralia</taxon>
        <taxon>Lophotrochozoa</taxon>
        <taxon>Mollusca</taxon>
        <taxon>Gastropoda</taxon>
        <taxon>Caenogastropoda</taxon>
        <taxon>Neogastropoda</taxon>
        <taxon>Conoidea</taxon>
        <taxon>Conidae</taxon>
        <taxon>Conus</taxon>
        <taxon>Gastridium</taxon>
    </lineage>
</organism>
<name>CA1C_CONGE</name>
<dbReference type="EMBL" id="AF526267">
    <property type="protein sequence ID" value="AAO33169.1"/>
    <property type="molecule type" value="Genomic_DNA"/>
</dbReference>
<dbReference type="PDB" id="1UL2">
    <property type="method" value="NMR"/>
    <property type="chains" value="A=21-36"/>
</dbReference>
<dbReference type="PDB" id="5CO5">
    <property type="method" value="X-ray"/>
    <property type="resolution" value="2.10 A"/>
    <property type="chains" value="C/E/F/H/J=21-36"/>
</dbReference>
<dbReference type="PDBsum" id="1UL2"/>
<dbReference type="PDBsum" id="5CO5"/>
<dbReference type="SMR" id="Q86RB2"/>
<dbReference type="TCDB" id="8.B.32.1.7">
    <property type="family name" value="the nicotinic acetylcholine receptor-targeting alpha-conotoxin (a-conotoxin) family"/>
</dbReference>
<dbReference type="ConoServer" id="97">
    <property type="toxin name" value="GIC precursor"/>
</dbReference>
<dbReference type="EvolutionaryTrace" id="Q86RB2"/>
<dbReference type="GO" id="GO:0005576">
    <property type="term" value="C:extracellular region"/>
    <property type="evidence" value="ECO:0007669"/>
    <property type="project" value="UniProtKB-SubCell"/>
</dbReference>
<dbReference type="GO" id="GO:0035792">
    <property type="term" value="C:host cell postsynaptic membrane"/>
    <property type="evidence" value="ECO:0007669"/>
    <property type="project" value="UniProtKB-KW"/>
</dbReference>
<dbReference type="GO" id="GO:0030550">
    <property type="term" value="F:acetylcholine receptor inhibitor activity"/>
    <property type="evidence" value="ECO:0007669"/>
    <property type="project" value="UniProtKB-KW"/>
</dbReference>
<dbReference type="GO" id="GO:0099106">
    <property type="term" value="F:ion channel regulator activity"/>
    <property type="evidence" value="ECO:0007669"/>
    <property type="project" value="UniProtKB-KW"/>
</dbReference>
<dbReference type="GO" id="GO:0090729">
    <property type="term" value="F:toxin activity"/>
    <property type="evidence" value="ECO:0007669"/>
    <property type="project" value="UniProtKB-KW"/>
</dbReference>
<dbReference type="InterPro" id="IPR009958">
    <property type="entry name" value="Conotoxin_a-typ"/>
</dbReference>
<dbReference type="InterPro" id="IPR018072">
    <property type="entry name" value="Conotoxin_a-typ_CS"/>
</dbReference>
<dbReference type="Pfam" id="PF07365">
    <property type="entry name" value="Toxin_8"/>
    <property type="match status" value="1"/>
</dbReference>
<dbReference type="PROSITE" id="PS60014">
    <property type="entry name" value="ALPHA_CONOTOXIN"/>
    <property type="match status" value="1"/>
</dbReference>
<feature type="propeptide" id="PRO_0000034875">
    <location>
        <begin position="1" status="less than"/>
        <end position="20"/>
    </location>
</feature>
<feature type="peptide" id="PRO_0000034876" description="Alpha-conotoxin GIC" evidence="7 8">
    <location>
        <begin position="21"/>
        <end position="36"/>
    </location>
</feature>
<feature type="region of interest" description="Ser-Xaa-Pro motif, crucial for potent interaction with nAChR" evidence="2">
    <location>
        <begin position="24"/>
        <end position="26"/>
    </location>
</feature>
<feature type="modified residue" description="Cysteine amide" evidence="7 8">
    <location>
        <position position="36"/>
    </location>
</feature>
<feature type="disulfide bond" evidence="7 8">
    <location>
        <begin position="22"/>
        <end position="28"/>
    </location>
</feature>
<feature type="disulfide bond" evidence="7 8">
    <location>
        <begin position="23"/>
        <end position="36"/>
    </location>
</feature>
<feature type="non-terminal residue">
    <location>
        <position position="1"/>
    </location>
</feature>
<feature type="helix" evidence="9">
    <location>
        <begin position="22"/>
        <end position="24"/>
    </location>
</feature>
<feature type="helix" evidence="9">
    <location>
        <begin position="26"/>
        <end position="31"/>
    </location>
</feature>
<feature type="turn" evidence="9">
    <location>
        <begin position="33"/>
        <end position="35"/>
    </location>
</feature>
<reference key="1">
    <citation type="journal article" date="2002" name="J. Biol. Chem.">
        <title>Alpha-conotoxin GIC from Conus geographus, a novel peptide antagonist of nicotinic acetylcholine receptors.</title>
        <authorList>
            <person name="McIntosh J.M."/>
            <person name="Dowell C."/>
            <person name="Watkins M."/>
            <person name="Garrett J.E."/>
            <person name="Yoshikami D."/>
            <person name="Olivera B.M."/>
        </authorList>
    </citation>
    <scope>NUCLEOTIDE SEQUENCE [GENOMIC DNA]</scope>
    <scope>FUNCTION</scope>
    <scope>SYNTHESIS OF 21-36</scope>
    <scope>AMIDATION AT CYS-36</scope>
    <scope>DISULFIDE BONDS</scope>
    <scope>MASS SPECTROMETRY</scope>
    <source>
        <tissue>Hepatopancreas</tissue>
    </source>
</reference>
<reference key="2">
    <citation type="journal article" date="2004" name="Biochem. J.">
        <title>Solution conformation of alpha-conotoxin GIC, a novel potent antagonist of alpha3beta2 nicotinic acetylcholine receptors.</title>
        <authorList>
            <person name="Chi S.-W."/>
            <person name="Kim D.-H."/>
            <person name="Olivera B.M."/>
            <person name="McIntosh J.M."/>
            <person name="Han K.-H."/>
        </authorList>
    </citation>
    <scope>STRUCTURE BY NMR OF 21-36</scope>
    <scope>SYNTHESIS OF 21-36</scope>
    <scope>AMIDATION AT CYS-36</scope>
    <scope>DISULFIDE BONDS</scope>
</reference>
<sequence length="40" mass="4246">SDGRNDAAKAFDLISSTVKKGCCSHPACAGNNQHICGRRR</sequence>
<keyword id="KW-0002">3D-structure</keyword>
<keyword id="KW-0008">Acetylcholine receptor inhibiting toxin</keyword>
<keyword id="KW-0027">Amidation</keyword>
<keyword id="KW-0165">Cleavage on pair of basic residues</keyword>
<keyword id="KW-1015">Disulfide bond</keyword>
<keyword id="KW-0872">Ion channel impairing toxin</keyword>
<keyword id="KW-0528">Neurotoxin</keyword>
<keyword id="KW-0629">Postsynaptic neurotoxin</keyword>
<keyword id="KW-0964">Secreted</keyword>
<keyword id="KW-0800">Toxin</keyword>
<protein>
    <recommendedName>
        <fullName evidence="4 5">Alpha-conotoxin GIC</fullName>
    </recommendedName>
</protein>
<comment type="function">
    <text evidence="3">Alpha-conotoxins bind to the nicotinic acetylcholine receptors (nAChR) and inhibit them. This toxin reversibly blocks neuronal nAChRs (alpha-3/beta-2 = alpha-6 or -3/beta-2 or -3 &gt; alpha-3/beta-4 = alpha-4/beta-2).</text>
</comment>
<comment type="subcellular location">
    <subcellularLocation>
        <location evidence="1">Secreted</location>
    </subcellularLocation>
</comment>
<comment type="tissue specificity">
    <text evidence="6">Expressed by the venom duct.</text>
</comment>
<comment type="domain">
    <text evidence="6">The cysteine framework is I (CC-C-C). Alpha4/7 pattern.</text>
</comment>
<comment type="mass spectrometry" mass="1609.5" method="LSI" evidence="3"/>
<comment type="similarity">
    <text evidence="6">Belongs to the conotoxin A superfamily.</text>
</comment>